<dbReference type="EMBL" id="FJ030941">
    <property type="protein sequence ID" value="ACJ12915.1"/>
    <property type="molecule type" value="mRNA"/>
</dbReference>
<dbReference type="RefSeq" id="NP_001135410.1">
    <property type="nucleotide sequence ID" value="NM_001141938.1"/>
</dbReference>
<dbReference type="STRING" id="9555.ENSPANP00000046806"/>
<dbReference type="Ensembl" id="ENSPANT00000006616.3">
    <property type="protein sequence ID" value="ENSPANP00000012161.2"/>
    <property type="gene ID" value="ENSPANG00000046278.1"/>
</dbReference>
<dbReference type="GeneID" id="100196939"/>
<dbReference type="KEGG" id="panu:100196939"/>
<dbReference type="CTD" id="100196939"/>
<dbReference type="eggNOG" id="ENOG502TEA8">
    <property type="taxonomic scope" value="Eukaryota"/>
</dbReference>
<dbReference type="GeneTree" id="ENSGT00940000153268"/>
<dbReference type="HOGENOM" id="CLU_160803_2_0_1"/>
<dbReference type="OMA" id="CFFGRRC"/>
<dbReference type="Proteomes" id="UP000028761">
    <property type="component" value="Chromosome 8"/>
</dbReference>
<dbReference type="Bgee" id="ENSPANG00000033219">
    <property type="expression patterns" value="Expressed in bone marrow and 30 other cell types or tissues"/>
</dbReference>
<dbReference type="GO" id="GO:0031012">
    <property type="term" value="C:extracellular matrix"/>
    <property type="evidence" value="ECO:0007669"/>
    <property type="project" value="TreeGrafter"/>
</dbReference>
<dbReference type="GO" id="GO:0005615">
    <property type="term" value="C:extracellular space"/>
    <property type="evidence" value="ECO:0007669"/>
    <property type="project" value="InterPro"/>
</dbReference>
<dbReference type="GO" id="GO:0019731">
    <property type="term" value="P:antibacterial humoral response"/>
    <property type="evidence" value="ECO:0007669"/>
    <property type="project" value="TreeGrafter"/>
</dbReference>
<dbReference type="GO" id="GO:0061844">
    <property type="term" value="P:antimicrobial humoral immune response mediated by antimicrobial peptide"/>
    <property type="evidence" value="ECO:0007669"/>
    <property type="project" value="TreeGrafter"/>
</dbReference>
<dbReference type="GO" id="GO:0071222">
    <property type="term" value="P:cellular response to lipopolysaccharide"/>
    <property type="evidence" value="ECO:0007669"/>
    <property type="project" value="TreeGrafter"/>
</dbReference>
<dbReference type="GO" id="GO:0050832">
    <property type="term" value="P:defense response to fungus"/>
    <property type="evidence" value="ECO:0007669"/>
    <property type="project" value="UniProtKB-KW"/>
</dbReference>
<dbReference type="GO" id="GO:0050829">
    <property type="term" value="P:defense response to Gram-negative bacterium"/>
    <property type="evidence" value="ECO:0007669"/>
    <property type="project" value="TreeGrafter"/>
</dbReference>
<dbReference type="GO" id="GO:0050830">
    <property type="term" value="P:defense response to Gram-positive bacterium"/>
    <property type="evidence" value="ECO:0007669"/>
    <property type="project" value="TreeGrafter"/>
</dbReference>
<dbReference type="GO" id="GO:0051673">
    <property type="term" value="P:disruption of plasma membrane integrity in another organism"/>
    <property type="evidence" value="ECO:0007669"/>
    <property type="project" value="TreeGrafter"/>
</dbReference>
<dbReference type="GO" id="GO:0002227">
    <property type="term" value="P:innate immune response in mucosa"/>
    <property type="evidence" value="ECO:0007669"/>
    <property type="project" value="TreeGrafter"/>
</dbReference>
<dbReference type="GO" id="GO:0031640">
    <property type="term" value="P:killing of cells of another organism"/>
    <property type="evidence" value="ECO:0007669"/>
    <property type="project" value="UniProtKB-KW"/>
</dbReference>
<dbReference type="InterPro" id="IPR016327">
    <property type="entry name" value="Alpha-defensin"/>
</dbReference>
<dbReference type="InterPro" id="IPR002366">
    <property type="entry name" value="Alpha-defensin_N"/>
</dbReference>
<dbReference type="PANTHER" id="PTHR11876">
    <property type="entry name" value="ALPHA-DEFENSIN 1"/>
    <property type="match status" value="1"/>
</dbReference>
<dbReference type="PANTHER" id="PTHR11876:SF34">
    <property type="entry name" value="DEMIDEFENSIN-3"/>
    <property type="match status" value="1"/>
</dbReference>
<dbReference type="Pfam" id="PF00879">
    <property type="entry name" value="Defensin_propep"/>
    <property type="match status" value="1"/>
</dbReference>
<dbReference type="PIRSF" id="PIRSF001875">
    <property type="entry name" value="Alpha-defensin"/>
    <property type="match status" value="1"/>
</dbReference>
<dbReference type="SMART" id="SM01418">
    <property type="entry name" value="Defensin_propep"/>
    <property type="match status" value="1"/>
</dbReference>
<reference evidence="5 6" key="1">
    <citation type="journal article" date="2008" name="Infect. Immun.">
        <title>Isolation, synthesis, and antimicrobial activities of naturally occurring theta-defensin isoforms from baboon leukocytes.</title>
        <authorList>
            <person name="Garcia A.E."/>
            <person name="Oesapay G."/>
            <person name="Tran P.A."/>
            <person name="Yuan J."/>
            <person name="Selsted M.E."/>
        </authorList>
    </citation>
    <scope>NUCLEOTIDE SEQUENCE [MRNA]</scope>
    <scope>PROTEIN SEQUENCE OF 65-73</scope>
    <scope>IDENTIFICATION OF BTD-4</scope>
    <scope>SYNTHESIS OF BTD-4</scope>
    <scope>FUNCTION</scope>
    <scope>SUBUNIT</scope>
    <scope>MASS SPECTROMETRY</scope>
    <source>
        <tissue evidence="3">Bone marrow</tissue>
        <tissue evidence="3">Leukocyte</tissue>
    </source>
</reference>
<comment type="function">
    <text evidence="3">BTD-4 has antimicrobial activity against the Gram-negative bacterium E.coli ML35, the Gram-positive bacterium S.aureus 502a, and the fungus C.albicans 16820.</text>
</comment>
<comment type="subunit">
    <text evidence="3">BTD-4 is a cyclic heterodimer composed of subunits A and C; disulfide-linked.</text>
</comment>
<comment type="PTM">
    <text evidence="3">Forms a cyclic peptide with subunit A (BTD-4). An additional intersubunit disulfide bond is formed.</text>
</comment>
<comment type="mass spectrometry" mass="1996.57" method="MALDI" evidence="3">
    <text>BTD-4, heterodimer, cyclized.</text>
</comment>
<comment type="similarity">
    <text evidence="2">Belongs to the alpha-defensin family. Theta subfamily.</text>
</comment>
<evidence type="ECO:0000250" key="1">
    <source>
        <dbReference type="UniProtKB" id="P82271"/>
    </source>
</evidence>
<evidence type="ECO:0000255" key="2"/>
<evidence type="ECO:0000269" key="3">
    <source>
    </source>
</evidence>
<evidence type="ECO:0000303" key="4">
    <source>
    </source>
</evidence>
<evidence type="ECO:0000305" key="5"/>
<evidence type="ECO:0000312" key="6">
    <source>
        <dbReference type="EMBL" id="ACJ12915.1"/>
    </source>
</evidence>
<keyword id="KW-0044">Antibiotic</keyword>
<keyword id="KW-0929">Antimicrobial</keyword>
<keyword id="KW-0211">Defensin</keyword>
<keyword id="KW-0903">Direct protein sequencing</keyword>
<keyword id="KW-1015">Disulfide bond</keyword>
<keyword id="KW-0295">Fungicide</keyword>
<keyword id="KW-1185">Reference proteome</keyword>
<keyword id="KW-0732">Signal</keyword>
<proteinExistence type="evidence at protein level"/>
<accession>B6ULW6</accession>
<accession>P86033</accession>
<gene>
    <name type="primary">BTDC</name>
</gene>
<protein>
    <recommendedName>
        <fullName>Theta defensin subunit C</fullName>
        <shortName evidence="4">BTD-c</shortName>
    </recommendedName>
    <alternativeName>
        <fullName>BTD-4 subunit 2</fullName>
    </alternativeName>
</protein>
<sequence length="76" mass="8299">MRTFAFLTAMLLLVALHAQAEARQARADEAAIQEQPGADDQGMAHSFTRNESAVLPLSESERGLRCICLLGICRLL</sequence>
<feature type="signal peptide" evidence="2">
    <location>
        <begin position="1"/>
        <end position="22"/>
    </location>
</feature>
<feature type="propeptide" id="PRO_0000364013" evidence="3">
    <location>
        <begin position="23"/>
        <end position="64"/>
    </location>
</feature>
<feature type="peptide" id="PRO_0000364014" description="Theta defensin subunit C">
    <location>
        <begin position="65"/>
        <end position="73"/>
    </location>
</feature>
<feature type="propeptide" id="PRO_0000364015" evidence="3">
    <location>
        <begin position="74"/>
        <end position="76"/>
    </location>
</feature>
<feature type="disulfide bond" description="Interchain (with C-66 in subunit A); in form BTD-4" evidence="1">
    <location>
        <position position="66"/>
    </location>
</feature>
<feature type="disulfide bond" evidence="1">
    <location>
        <begin position="68"/>
        <end position="73"/>
    </location>
</feature>
<feature type="cross-link" description="Cyclopeptide (Arg-Cys) (interchain with C-73 in subunit A); in form BTD-4" evidence="3">
    <location>
        <position position="65"/>
    </location>
</feature>
<feature type="cross-link" description="Cyclopeptide (Cys-Arg) (interchain with R-65 in subunit A); in form BTD-4" evidence="3">
    <location>
        <position position="73"/>
    </location>
</feature>
<organism>
    <name type="scientific">Papio anubis</name>
    <name type="common">Olive baboon</name>
    <dbReference type="NCBI Taxonomy" id="9555"/>
    <lineage>
        <taxon>Eukaryota</taxon>
        <taxon>Metazoa</taxon>
        <taxon>Chordata</taxon>
        <taxon>Craniata</taxon>
        <taxon>Vertebrata</taxon>
        <taxon>Euteleostomi</taxon>
        <taxon>Mammalia</taxon>
        <taxon>Eutheria</taxon>
        <taxon>Euarchontoglires</taxon>
        <taxon>Primates</taxon>
        <taxon>Haplorrhini</taxon>
        <taxon>Catarrhini</taxon>
        <taxon>Cercopithecidae</taxon>
        <taxon>Cercopithecinae</taxon>
        <taxon>Papio</taxon>
    </lineage>
</organism>
<name>BTDC_PAPAN</name>